<sequence>MAQLPPKIPTMTTPNWPDFSSQKLPSIAATAAAAATAGPQQQNPSWMDEFLDFSATRRGTHRRSISDSIAFLEPPSSGVGNHHFDRFDDEQFMSMFNDDVHNNNHNHHHHHSINGNVGPTRSSSNTSTPSDHNSLSDDDNNKEAPPSDHDHHMDNNVANQNNAAGNNYNESDEVQSQCKTEPQDGPSANQNSGGSSGNRIHDPKRVKRILANRQSAQRSRVRKLQYISELERSVTSLQTEVSVLSPRVAFLDHQRLLLNVDNSAIKQRIAALAQDKIFKDAHQEALKREIERLRQVYHQQSLKKMENNVSDQSPADIKPSVEKEQLLNV</sequence>
<reference key="1">
    <citation type="submission" date="2001-07" db="EMBL/GenBank/DDBJ databases">
        <title>The family of bZIP transcription factors in Arabidopsis thaliana.</title>
        <authorList>
            <person name="Tiedemann J."/>
        </authorList>
    </citation>
    <scope>NUCLEOTIDE SEQUENCE [MRNA]</scope>
    <source>
        <strain>cv. Columbia</strain>
        <tissue>Flower</tissue>
        <tissue>Silique</tissue>
    </source>
</reference>
<reference key="2">
    <citation type="journal article" date="2000" name="Nature">
        <title>Sequence and analysis of chromosome 3 of the plant Arabidopsis thaliana.</title>
        <authorList>
            <person name="Salanoubat M."/>
            <person name="Lemcke K."/>
            <person name="Rieger M."/>
            <person name="Ansorge W."/>
            <person name="Unseld M."/>
            <person name="Fartmann B."/>
            <person name="Valle G."/>
            <person name="Bloecker H."/>
            <person name="Perez-Alonso M."/>
            <person name="Obermaier B."/>
            <person name="Delseny M."/>
            <person name="Boutry M."/>
            <person name="Grivell L.A."/>
            <person name="Mache R."/>
            <person name="Puigdomenech P."/>
            <person name="De Simone V."/>
            <person name="Choisne N."/>
            <person name="Artiguenave F."/>
            <person name="Robert C."/>
            <person name="Brottier P."/>
            <person name="Wincker P."/>
            <person name="Cattolico L."/>
            <person name="Weissenbach J."/>
            <person name="Saurin W."/>
            <person name="Quetier F."/>
            <person name="Schaefer M."/>
            <person name="Mueller-Auer S."/>
            <person name="Gabel C."/>
            <person name="Fuchs M."/>
            <person name="Benes V."/>
            <person name="Wurmbach E."/>
            <person name="Drzonek H."/>
            <person name="Erfle H."/>
            <person name="Jordan N."/>
            <person name="Bangert S."/>
            <person name="Wiedelmann R."/>
            <person name="Kranz H."/>
            <person name="Voss H."/>
            <person name="Holland R."/>
            <person name="Brandt P."/>
            <person name="Nyakatura G."/>
            <person name="Vezzi A."/>
            <person name="D'Angelo M."/>
            <person name="Pallavicini A."/>
            <person name="Toppo S."/>
            <person name="Simionati B."/>
            <person name="Conrad A."/>
            <person name="Hornischer K."/>
            <person name="Kauer G."/>
            <person name="Loehnert T.-H."/>
            <person name="Nordsiek G."/>
            <person name="Reichelt J."/>
            <person name="Scharfe M."/>
            <person name="Schoen O."/>
            <person name="Bargues M."/>
            <person name="Terol J."/>
            <person name="Climent J."/>
            <person name="Navarro P."/>
            <person name="Collado C."/>
            <person name="Perez-Perez A."/>
            <person name="Ottenwaelder B."/>
            <person name="Duchemin D."/>
            <person name="Cooke R."/>
            <person name="Laudie M."/>
            <person name="Berger-Llauro C."/>
            <person name="Purnelle B."/>
            <person name="Masuy D."/>
            <person name="de Haan M."/>
            <person name="Maarse A.C."/>
            <person name="Alcaraz J.-P."/>
            <person name="Cottet A."/>
            <person name="Casacuberta E."/>
            <person name="Monfort A."/>
            <person name="Argiriou A."/>
            <person name="Flores M."/>
            <person name="Liguori R."/>
            <person name="Vitale D."/>
            <person name="Mannhaupt G."/>
            <person name="Haase D."/>
            <person name="Schoof H."/>
            <person name="Rudd S."/>
            <person name="Zaccaria P."/>
            <person name="Mewes H.-W."/>
            <person name="Mayer K.F.X."/>
            <person name="Kaul S."/>
            <person name="Town C.D."/>
            <person name="Koo H.L."/>
            <person name="Tallon L.J."/>
            <person name="Jenkins J."/>
            <person name="Rooney T."/>
            <person name="Rizzo M."/>
            <person name="Walts A."/>
            <person name="Utterback T."/>
            <person name="Fujii C.Y."/>
            <person name="Shea T.P."/>
            <person name="Creasy T.H."/>
            <person name="Haas B."/>
            <person name="Maiti R."/>
            <person name="Wu D."/>
            <person name="Peterson J."/>
            <person name="Van Aken S."/>
            <person name="Pai G."/>
            <person name="Militscher J."/>
            <person name="Sellers P."/>
            <person name="Gill J.E."/>
            <person name="Feldblyum T.V."/>
            <person name="Preuss D."/>
            <person name="Lin X."/>
            <person name="Nierman W.C."/>
            <person name="Salzberg S.L."/>
            <person name="White O."/>
            <person name="Venter J.C."/>
            <person name="Fraser C.M."/>
            <person name="Kaneko T."/>
            <person name="Nakamura Y."/>
            <person name="Sato S."/>
            <person name="Kato T."/>
            <person name="Asamizu E."/>
            <person name="Sasamoto S."/>
            <person name="Kimura T."/>
            <person name="Idesawa K."/>
            <person name="Kawashima K."/>
            <person name="Kishida Y."/>
            <person name="Kiyokawa C."/>
            <person name="Kohara M."/>
            <person name="Matsumoto M."/>
            <person name="Matsuno A."/>
            <person name="Muraki A."/>
            <person name="Nakayama S."/>
            <person name="Nakazaki N."/>
            <person name="Shinpo S."/>
            <person name="Takeuchi C."/>
            <person name="Wada T."/>
            <person name="Watanabe A."/>
            <person name="Yamada M."/>
            <person name="Yasuda M."/>
            <person name="Tabata S."/>
        </authorList>
    </citation>
    <scope>NUCLEOTIDE SEQUENCE [LARGE SCALE GENOMIC DNA]</scope>
    <source>
        <strain>cv. Columbia</strain>
    </source>
</reference>
<reference key="3">
    <citation type="journal article" date="2017" name="Plant J.">
        <title>Araport11: a complete reannotation of the Arabidopsis thaliana reference genome.</title>
        <authorList>
            <person name="Cheng C.Y."/>
            <person name="Krishnakumar V."/>
            <person name="Chan A.P."/>
            <person name="Thibaud-Nissen F."/>
            <person name="Schobel S."/>
            <person name="Town C.D."/>
        </authorList>
    </citation>
    <scope>GENOME REANNOTATION</scope>
    <source>
        <strain>cv. Columbia</strain>
    </source>
</reference>
<reference key="4">
    <citation type="journal article" date="2002" name="Trends Plant Sci.">
        <title>bZIP transcription factors in Arabidopsis.</title>
        <authorList>
            <person name="Jakoby M."/>
            <person name="Weisshaar B."/>
            <person name="Droege-Laser W."/>
            <person name="Vicente-Carbajosa J."/>
            <person name="Tiedemann J."/>
            <person name="Kroj T."/>
            <person name="Parcy F."/>
        </authorList>
    </citation>
    <scope>GENE FAMILY</scope>
    <scope>NOMENCLATURE</scope>
</reference>
<reference key="5">
    <citation type="journal article" date="2007" name="Biochem. Biophys. Res. Commun.">
        <title>A conserved proline residue in the leucine zipper region of AtbZIP34 and AtbZIP61 in Arabidopsis thaliana interferes with the formation of homodimer.</title>
        <authorList>
            <person name="Shen H."/>
            <person name="Cao K."/>
            <person name="Wang X."/>
        </authorList>
    </citation>
    <scope>FUNCTION</scope>
    <scope>INTERACTION WITH BZIP43 AND VIP1/BZIP51</scope>
    <scope>SUBCELLULAR LOCATION</scope>
    <scope>MUTAGENESIS OF PRO-246</scope>
</reference>
<reference key="6">
    <citation type="journal article" date="2017" name="Plant Reprod.">
        <title>Characterization of pollen-expressed bZIP protein interactions and the role of ATbZIP18 in the male gametophyte.</title>
        <authorList>
            <person name="Gibalova A."/>
            <person name="Steinbachova L."/>
            <person name="Hafidh S."/>
            <person name="Blahova V."/>
            <person name="Gadiou Z."/>
            <person name="Michailidis C."/>
            <person name="Muller K."/>
            <person name="Pleskot R."/>
            <person name="Duplakova N."/>
            <person name="Honys D."/>
        </authorList>
    </citation>
    <scope>SUBUNIT</scope>
    <scope>INTERACTION WITH BZIP18</scope>
</reference>
<dbReference type="EMBL" id="AF401300">
    <property type="protein sequence ID" value="AAK84223.1"/>
    <property type="molecule type" value="mRNA"/>
</dbReference>
<dbReference type="EMBL" id="AL137081">
    <property type="protein sequence ID" value="CAB68150.1"/>
    <property type="molecule type" value="Genomic_DNA"/>
</dbReference>
<dbReference type="EMBL" id="CP002686">
    <property type="protein sequence ID" value="AEE79744.1"/>
    <property type="molecule type" value="Genomic_DNA"/>
</dbReference>
<dbReference type="EMBL" id="AY093053">
    <property type="protein sequence ID" value="AAM13052.1"/>
    <property type="molecule type" value="mRNA"/>
</dbReference>
<dbReference type="EMBL" id="AY087356">
    <property type="protein sequence ID" value="AAM64906.1"/>
    <property type="molecule type" value="mRNA"/>
</dbReference>
<dbReference type="EMBL" id="BT008728">
    <property type="protein sequence ID" value="AAP42741.1"/>
    <property type="molecule type" value="mRNA"/>
</dbReference>
<dbReference type="PIR" id="T45972">
    <property type="entry name" value="T45972"/>
</dbReference>
<dbReference type="RefSeq" id="NP_191371.1">
    <property type="nucleotide sequence ID" value="NM_115674.4"/>
</dbReference>
<dbReference type="SMR" id="Q9M2K4"/>
<dbReference type="BioGRID" id="10296">
    <property type="interactions" value="14"/>
</dbReference>
<dbReference type="FunCoup" id="Q9M2K4">
    <property type="interactions" value="252"/>
</dbReference>
<dbReference type="IntAct" id="Q9M2K4">
    <property type="interactions" value="12"/>
</dbReference>
<dbReference type="STRING" id="3702.Q9M2K4"/>
<dbReference type="GlyGen" id="Q9M2K4">
    <property type="glycosylation" value="2 sites"/>
</dbReference>
<dbReference type="iPTMnet" id="Q9M2K4"/>
<dbReference type="PaxDb" id="3702-AT3G58120.1"/>
<dbReference type="ProteomicsDB" id="239107"/>
<dbReference type="EnsemblPlants" id="AT3G58120.1">
    <property type="protein sequence ID" value="AT3G58120.1"/>
    <property type="gene ID" value="AT3G58120"/>
</dbReference>
<dbReference type="GeneID" id="824981"/>
<dbReference type="Gramene" id="AT3G58120.1">
    <property type="protein sequence ID" value="AT3G58120.1"/>
    <property type="gene ID" value="AT3G58120"/>
</dbReference>
<dbReference type="KEGG" id="ath:AT3G58120"/>
<dbReference type="Araport" id="AT3G58120"/>
<dbReference type="TAIR" id="AT3G58120">
    <property type="gene designation" value="BZIP61"/>
</dbReference>
<dbReference type="eggNOG" id="ENOG502QQW5">
    <property type="taxonomic scope" value="Eukaryota"/>
</dbReference>
<dbReference type="HOGENOM" id="CLU_059253_1_0_1"/>
<dbReference type="InParanoid" id="Q9M2K4"/>
<dbReference type="OrthoDB" id="1435597at2759"/>
<dbReference type="PhylomeDB" id="Q9M2K4"/>
<dbReference type="PRO" id="PR:Q9M2K4"/>
<dbReference type="Proteomes" id="UP000006548">
    <property type="component" value="Chromosome 3"/>
</dbReference>
<dbReference type="ExpressionAtlas" id="Q9M2K4">
    <property type="expression patterns" value="baseline and differential"/>
</dbReference>
<dbReference type="GO" id="GO:0005634">
    <property type="term" value="C:nucleus"/>
    <property type="evidence" value="ECO:0000314"/>
    <property type="project" value="TAIR"/>
</dbReference>
<dbReference type="GO" id="GO:0003677">
    <property type="term" value="F:DNA binding"/>
    <property type="evidence" value="ECO:0000314"/>
    <property type="project" value="TAIR"/>
</dbReference>
<dbReference type="GO" id="GO:0003700">
    <property type="term" value="F:DNA-binding transcription factor activity"/>
    <property type="evidence" value="ECO:0000250"/>
    <property type="project" value="TAIR"/>
</dbReference>
<dbReference type="GO" id="GO:0000976">
    <property type="term" value="F:transcription cis-regulatory region binding"/>
    <property type="evidence" value="ECO:0000353"/>
    <property type="project" value="TAIR"/>
</dbReference>
<dbReference type="GO" id="GO:0045893">
    <property type="term" value="P:positive regulation of DNA-templated transcription"/>
    <property type="evidence" value="ECO:0000314"/>
    <property type="project" value="TAIR"/>
</dbReference>
<dbReference type="CDD" id="cd14703">
    <property type="entry name" value="bZIP_plant_RF2"/>
    <property type="match status" value="1"/>
</dbReference>
<dbReference type="FunFam" id="1.20.5.170:FF:000057">
    <property type="entry name" value="Basic leucine zipper 61"/>
    <property type="match status" value="1"/>
</dbReference>
<dbReference type="Gene3D" id="1.20.5.170">
    <property type="match status" value="1"/>
</dbReference>
<dbReference type="InterPro" id="IPR004827">
    <property type="entry name" value="bZIP"/>
</dbReference>
<dbReference type="InterPro" id="IPR044759">
    <property type="entry name" value="bZIP_RF2"/>
</dbReference>
<dbReference type="InterPro" id="IPR046347">
    <property type="entry name" value="bZIP_sf"/>
</dbReference>
<dbReference type="InterPro" id="IPR052483">
    <property type="entry name" value="bZIP_transcription_regulators"/>
</dbReference>
<dbReference type="PANTHER" id="PTHR46391">
    <property type="entry name" value="BASIC LEUCINE ZIPPER 34"/>
    <property type="match status" value="1"/>
</dbReference>
<dbReference type="PANTHER" id="PTHR46391:SF20">
    <property type="entry name" value="BASIC LEUCINE ZIPPER 61"/>
    <property type="match status" value="1"/>
</dbReference>
<dbReference type="Pfam" id="PF00170">
    <property type="entry name" value="bZIP_1"/>
    <property type="match status" value="1"/>
</dbReference>
<dbReference type="SMART" id="SM00338">
    <property type="entry name" value="BRLZ"/>
    <property type="match status" value="1"/>
</dbReference>
<dbReference type="SUPFAM" id="SSF57959">
    <property type="entry name" value="Leucine zipper domain"/>
    <property type="match status" value="1"/>
</dbReference>
<dbReference type="PROSITE" id="PS50217">
    <property type="entry name" value="BZIP"/>
    <property type="match status" value="1"/>
</dbReference>
<dbReference type="PROSITE" id="PS00036">
    <property type="entry name" value="BZIP_BASIC"/>
    <property type="match status" value="1"/>
</dbReference>
<organism>
    <name type="scientific">Arabidopsis thaliana</name>
    <name type="common">Mouse-ear cress</name>
    <dbReference type="NCBI Taxonomy" id="3702"/>
    <lineage>
        <taxon>Eukaryota</taxon>
        <taxon>Viridiplantae</taxon>
        <taxon>Streptophyta</taxon>
        <taxon>Embryophyta</taxon>
        <taxon>Tracheophyta</taxon>
        <taxon>Spermatophyta</taxon>
        <taxon>Magnoliopsida</taxon>
        <taxon>eudicotyledons</taxon>
        <taxon>Gunneridae</taxon>
        <taxon>Pentapetalae</taxon>
        <taxon>rosids</taxon>
        <taxon>malvids</taxon>
        <taxon>Brassicales</taxon>
        <taxon>Brassicaceae</taxon>
        <taxon>Camelineae</taxon>
        <taxon>Arabidopsis</taxon>
    </lineage>
</organism>
<evidence type="ECO:0000255" key="1">
    <source>
        <dbReference type="PROSITE-ProRule" id="PRU00978"/>
    </source>
</evidence>
<evidence type="ECO:0000256" key="2">
    <source>
        <dbReference type="SAM" id="MobiDB-lite"/>
    </source>
</evidence>
<evidence type="ECO:0000269" key="3">
    <source>
    </source>
</evidence>
<evidence type="ECO:0000269" key="4">
    <source>
    </source>
</evidence>
<evidence type="ECO:0000303" key="5">
    <source>
    </source>
</evidence>
<feature type="chain" id="PRO_0000430353" description="Basic leucine zipper 61">
    <location>
        <begin position="1"/>
        <end position="329"/>
    </location>
</feature>
<feature type="domain" description="bZIP" evidence="1">
    <location>
        <begin position="202"/>
        <end position="254"/>
    </location>
</feature>
<feature type="region of interest" description="Disordered" evidence="2">
    <location>
        <begin position="1"/>
        <end position="22"/>
    </location>
</feature>
<feature type="region of interest" description="Disordered" evidence="2">
    <location>
        <begin position="98"/>
        <end position="204"/>
    </location>
</feature>
<feature type="region of interest" description="Basic motif" evidence="1">
    <location>
        <begin position="204"/>
        <end position="223"/>
    </location>
</feature>
<feature type="region of interest" description="Leucine-zipper" evidence="1">
    <location>
        <begin position="230"/>
        <end position="251"/>
    </location>
</feature>
<feature type="region of interest" description="Disordered" evidence="2">
    <location>
        <begin position="304"/>
        <end position="329"/>
    </location>
</feature>
<feature type="compositionally biased region" description="Polar residues" evidence="2">
    <location>
        <begin position="10"/>
        <end position="22"/>
    </location>
</feature>
<feature type="compositionally biased region" description="Low complexity" evidence="2">
    <location>
        <begin position="119"/>
        <end position="133"/>
    </location>
</feature>
<feature type="compositionally biased region" description="Basic and acidic residues" evidence="2">
    <location>
        <begin position="139"/>
        <end position="154"/>
    </location>
</feature>
<feature type="compositionally biased region" description="Low complexity" evidence="2">
    <location>
        <begin position="155"/>
        <end position="169"/>
    </location>
</feature>
<feature type="compositionally biased region" description="Polar residues" evidence="2">
    <location>
        <begin position="304"/>
        <end position="313"/>
    </location>
</feature>
<feature type="compositionally biased region" description="Basic and acidic residues" evidence="2">
    <location>
        <begin position="319"/>
        <end position="329"/>
    </location>
</feature>
<feature type="mutagenesis site" description="Homodimerization and binding to G-box element." evidence="3">
    <original>P</original>
    <variation>A</variation>
    <location>
        <position position="246"/>
    </location>
</feature>
<name>BZP61_ARATH</name>
<gene>
    <name evidence="5" type="primary">BZIP61</name>
    <name type="ordered locus">At3g58120</name>
    <name type="ORF">F9D24.30</name>
</gene>
<proteinExistence type="evidence at protein level"/>
<protein>
    <recommendedName>
        <fullName evidence="5">Basic leucine zipper 61</fullName>
        <shortName evidence="5">AtbZIP61</shortName>
        <shortName>bZIP protein 61</shortName>
    </recommendedName>
</protein>
<comment type="function">
    <text evidence="3">Transcriptional activator.</text>
</comment>
<comment type="subunit">
    <text evidence="3 4">Forms heterodimers with BZIP18, BZIP43 and VIP1/BZIP51.</text>
</comment>
<comment type="subcellular location">
    <subcellularLocation>
        <location evidence="1 3">Nucleus</location>
    </subcellularLocation>
</comment>
<keyword id="KW-0010">Activator</keyword>
<keyword id="KW-0539">Nucleus</keyword>
<keyword id="KW-1185">Reference proteome</keyword>
<keyword id="KW-0804">Transcription</keyword>
<keyword id="KW-0805">Transcription regulation</keyword>
<accession>Q9M2K4</accession>